<comment type="function">
    <text evidence="1 7 8">Proton-coupled amino-acid transporter that transports free histidine and certain di- and tripeptides, and is involved in innate immune response (By similarity). Also able to transport carnosine (PubMed:31073693, PubMed:31254495). Involved in the detection of microbial pathogens by toll-like receptors (TLRs) and NOD-like receptors (NLRs), probably by mediating transport of bacterial peptidoglycans across the endolysosomal membrane: catalyzes the transport of certain bacterial peptidoglycans, such as muramyl dipeptide (MDP), the NOD2 ligand (By similarity).</text>
</comment>
<comment type="catalytic activity">
    <reaction evidence="5">
        <text>glycylglycylglycine(out) + n H(+)(out) = glycylglycylglycine(in) + n H(+)(in)</text>
        <dbReference type="Rhea" id="RHEA:76391"/>
        <dbReference type="ChEBI" id="CHEBI:15378"/>
        <dbReference type="ChEBI" id="CHEBI:195214"/>
    </reaction>
    <physiologicalReaction direction="left-to-right" evidence="14">
        <dbReference type="Rhea" id="RHEA:76392"/>
    </physiologicalReaction>
</comment>
<comment type="catalytic activity">
    <reaction evidence="7">
        <text>carnosine(out) + n H(+)(out) = carnosine(in) + n H(+)(in)</text>
        <dbReference type="Rhea" id="RHEA:76383"/>
        <dbReference type="ChEBI" id="CHEBI:15378"/>
        <dbReference type="ChEBI" id="CHEBI:57485"/>
    </reaction>
    <physiologicalReaction direction="left-to-right" evidence="7">
        <dbReference type="Rhea" id="RHEA:76384"/>
    </physiologicalReaction>
</comment>
<comment type="catalytic activity">
    <reaction evidence="8">
        <text>L-histidine(out) + n H(+)(out) = L-histidine(in) + n H(+)(in)</text>
        <dbReference type="Rhea" id="RHEA:76379"/>
        <dbReference type="ChEBI" id="CHEBI:15378"/>
        <dbReference type="ChEBI" id="CHEBI:57595"/>
    </reaction>
    <physiologicalReaction direction="left-to-right" evidence="8">
        <dbReference type="Rhea" id="RHEA:76380"/>
    </physiologicalReaction>
</comment>
<comment type="catalytic activity">
    <reaction evidence="1">
        <text>N-acetyl-D-muramoyl-L-alanyl-D-isoglutamine(out) + n H(+)(out) = N-acetyl-D-muramoyl-L-alanyl-D-isoglutamine(in) + n H(+)(in)</text>
        <dbReference type="Rhea" id="RHEA:76371"/>
        <dbReference type="ChEBI" id="CHEBI:15378"/>
        <dbReference type="ChEBI" id="CHEBI:155830"/>
    </reaction>
    <physiologicalReaction direction="left-to-right" evidence="1">
        <dbReference type="Rhea" id="RHEA:76372"/>
    </physiologicalReaction>
</comment>
<comment type="biophysicochemical properties">
    <kinetics>
        <KM evidence="8">428 uM for glycyl-sarcosine</KM>
        <KM evidence="8">66.9 uM for L-histidine</KM>
        <KM evidence="8">5350 uM for valacyclovir</KM>
        <Vmax evidence="8">1860.0 pmol/min/mg enzyme toward L-histidine</Vmax>
        <Vmax evidence="8">73.6 pmol/min/mg enzyme glycyl-sarcosine</Vmax>
        <Vmax evidence="8">63.7 pmol/min/mg enzyme valacyclovir</Vmax>
    </kinetics>
    <phDependence>
        <text evidence="8">Optimum pH is 5.5.</text>
    </phDependence>
</comment>
<comment type="interaction">
    <interactant intactId="EBI-12179023">
        <id>Q8IY34</id>
    </interactant>
    <interactant intactId="EBI-740785">
        <id>P49639</id>
        <label>HOXA1</label>
    </interactant>
    <organismsDiffer>false</organismsDiffer>
    <experiments>3</experiments>
</comment>
<comment type="interaction">
    <interactant intactId="EBI-12179023">
        <id>Q8IY34</id>
    </interactant>
    <interactant intactId="EBI-10176379">
        <id>P59991</id>
        <label>KRTAP12-2</label>
    </interactant>
    <organismsDiffer>false</organismsDiffer>
    <experiments>4</experiments>
</comment>
<comment type="interaction">
    <interactant intactId="EBI-12179023">
        <id>Q8IY34</id>
    </interactant>
    <interactant intactId="EBI-12196745">
        <id>Q3LHN2</id>
        <label>KRTAP19-2</label>
    </interactant>
    <organismsDiffer>false</organismsDiffer>
    <experiments>3</experiments>
</comment>
<comment type="interaction">
    <interactant intactId="EBI-12179023">
        <id>Q8IY34</id>
    </interactant>
    <interactant intactId="EBI-3958099">
        <id>P26371</id>
        <label>KRTAP5-9</label>
    </interactant>
    <organismsDiffer>false</organismsDiffer>
    <experiments>3</experiments>
</comment>
<comment type="interaction">
    <interactant intactId="EBI-12179023">
        <id>Q8IY34</id>
    </interactant>
    <interactant intactId="EBI-11958364">
        <id>Q9BYQ0</id>
        <label>KRTAP9-8</label>
    </interactant>
    <organismsDiffer>false</organismsDiffer>
    <experiments>3</experiments>
</comment>
<comment type="interaction">
    <interactant intactId="EBI-12179023">
        <id>Q8IY34</id>
    </interactant>
    <interactant intactId="EBI-724076">
        <id>Q99750</id>
        <label>MDFI</label>
    </interactant>
    <organismsDiffer>false</organismsDiffer>
    <experiments>3</experiments>
</comment>
<comment type="interaction">
    <interactant intactId="EBI-12179023">
        <id>Q8IY34</id>
    </interactant>
    <interactant intactId="EBI-7445625">
        <id>Q9HC29</id>
        <label>NOD2</label>
    </interactant>
    <organismsDiffer>false</organismsDiffer>
    <experiments>2</experiments>
</comment>
<comment type="interaction">
    <interactant intactId="EBI-12179023">
        <id>Q8IY34</id>
    </interactant>
    <interactant intactId="EBI-4319594">
        <id>Q8N697</id>
        <label>SLC15A4</label>
    </interactant>
    <organismsDiffer>false</organismsDiffer>
    <experiments>2</experiments>
</comment>
<comment type="subcellular location">
    <subcellularLocation>
        <location evidence="6">Lysosome membrane</location>
        <topology evidence="2">Multi-pass membrane protein</topology>
    </subcellularLocation>
    <subcellularLocation>
        <location evidence="1">Endosome membrane</location>
        <topology evidence="2">Multi-pass membrane protein</topology>
    </subcellularLocation>
</comment>
<comment type="similarity">
    <text evidence="13">Belongs to the major facilitator superfamily. Proton-dependent oligopeptide transporter (POT/PTR) (TC 2.A.17) family.</text>
</comment>
<keyword id="KW-0002">3D-structure</keyword>
<keyword id="KW-0967">Endosome</keyword>
<keyword id="KW-0325">Glycoprotein</keyword>
<keyword id="KW-0391">Immunity</keyword>
<keyword id="KW-0399">Innate immunity</keyword>
<keyword id="KW-0458">Lysosome</keyword>
<keyword id="KW-0472">Membrane</keyword>
<keyword id="KW-0571">Peptide transport</keyword>
<keyword id="KW-0653">Protein transport</keyword>
<keyword id="KW-1267">Proteomics identification</keyword>
<keyword id="KW-1185">Reference proteome</keyword>
<keyword id="KW-0769">Symport</keyword>
<keyword id="KW-0812">Transmembrane</keyword>
<keyword id="KW-1133">Transmembrane helix</keyword>
<keyword id="KW-0813">Transport</keyword>
<sequence length="581" mass="63560">MPAPRAREQPRVPGERQPLLPRGARGPRRWRRAAGAAVLLVEMLERAAFFGVTANLVLYLNSTNFNWTGEQATRAALVFLGASYLLAPVGGWLADVYLGRYRAVALSLLLYLAASGLLPATAFPDGRSSFCGEMPASPLGPACPSAGCPRSSPSPYCAPVLYAGLLLLGLAASSVRSNLTSFGADQVMDLGRDATRRFFNWFYWSINLGAVLSLLVVAFIQQNISFLLGYSIPVGCVGLAFFIFLFATPVFITKPPMGSQVSSMLKLALQNCCPQLWQRHSARDRQCARVLADERSPQPGASPQEDIANFQVLVKILPVMVTLVPYWMVYFQMQSTYVLQGLHLHIPNIFPANPANISVALRAQGSSYTIPEAWLLLANVVVVLILVPLKDRLIDPLLLRCKLLPSALQKMALGMFFGFTSVIVAGVLEMERLHYIHHNETVSQQIGEVLYNAAPLSIWWQIPQYLLIGISEIFASIPGLEFAYSEAPRSMQGAIMGIFFCLSGVGSLLGSSLVALLSLPGGWLHCPKDFGNINNCRMDLYFFLLAGIQAVTALLFVWIAGRYERASQGPASHSRFSRDRG</sequence>
<name>S15A3_HUMAN</name>
<gene>
    <name evidence="15" type="primary">SLC15A3</name>
    <name evidence="12" type="synonym">OCTP</name>
    <name evidence="9 10" type="synonym">PHT2</name>
    <name evidence="11" type="synonym">PTR3</name>
</gene>
<evidence type="ECO:0000250" key="1">
    <source>
        <dbReference type="UniProtKB" id="Q8BPX9"/>
    </source>
</evidence>
<evidence type="ECO:0000255" key="2"/>
<evidence type="ECO:0000256" key="3">
    <source>
        <dbReference type="SAM" id="MobiDB-lite"/>
    </source>
</evidence>
<evidence type="ECO:0000269" key="4">
    <source>
    </source>
</evidence>
<evidence type="ECO:0000269" key="5">
    <source>
    </source>
</evidence>
<evidence type="ECO:0000269" key="6">
    <source>
    </source>
</evidence>
<evidence type="ECO:0000269" key="7">
    <source>
    </source>
</evidence>
<evidence type="ECO:0000269" key="8">
    <source>
    </source>
</evidence>
<evidence type="ECO:0000303" key="9">
    <source>
    </source>
</evidence>
<evidence type="ECO:0000303" key="10">
    <source>
    </source>
</evidence>
<evidence type="ECO:0000303" key="11">
    <source ref="1"/>
</evidence>
<evidence type="ECO:0000303" key="12">
    <source ref="2"/>
</evidence>
<evidence type="ECO:0000305" key="13"/>
<evidence type="ECO:0000305" key="14">
    <source>
    </source>
</evidence>
<evidence type="ECO:0000312" key="15">
    <source>
        <dbReference type="HGNC" id="HGNC:18068"/>
    </source>
</evidence>
<evidence type="ECO:0007829" key="16">
    <source>
        <dbReference type="PDB" id="8WX2"/>
    </source>
</evidence>
<organism>
    <name type="scientific">Homo sapiens</name>
    <name type="common">Human</name>
    <dbReference type="NCBI Taxonomy" id="9606"/>
    <lineage>
        <taxon>Eukaryota</taxon>
        <taxon>Metazoa</taxon>
        <taxon>Chordata</taxon>
        <taxon>Craniata</taxon>
        <taxon>Vertebrata</taxon>
        <taxon>Euteleostomi</taxon>
        <taxon>Mammalia</taxon>
        <taxon>Eutheria</taxon>
        <taxon>Euarchontoglires</taxon>
        <taxon>Primates</taxon>
        <taxon>Haplorrhini</taxon>
        <taxon>Catarrhini</taxon>
        <taxon>Hominidae</taxon>
        <taxon>Homo</taxon>
    </lineage>
</organism>
<protein>
    <recommendedName>
        <fullName evidence="13">Solute carrier family 15 member 3</fullName>
    </recommendedName>
    <alternativeName>
        <fullName evidence="12">Osteoclast transporter</fullName>
    </alternativeName>
    <alternativeName>
        <fullName evidence="11">Peptide transporter 3</fullName>
    </alternativeName>
    <alternativeName>
        <fullName evidence="9 10">Peptide/histidine transporter 2</fullName>
        <shortName evidence="9">hPHT2</shortName>
    </alternativeName>
</protein>
<proteinExistence type="evidence at protein level"/>
<feature type="chain" id="PRO_0000295912" description="Solute carrier family 15 member 3">
    <location>
        <begin position="1"/>
        <end position="581"/>
    </location>
</feature>
<feature type="transmembrane region" description="Helical" evidence="2">
    <location>
        <begin position="38"/>
        <end position="58"/>
    </location>
</feature>
<feature type="transmembrane region" description="Helical" evidence="2">
    <location>
        <begin position="76"/>
        <end position="96"/>
    </location>
</feature>
<feature type="transmembrane region" description="Helical" evidence="2">
    <location>
        <begin position="103"/>
        <end position="123"/>
    </location>
</feature>
<feature type="transmembrane region" description="Helical" evidence="2">
    <location>
        <begin position="155"/>
        <end position="175"/>
    </location>
</feature>
<feature type="transmembrane region" description="Helical" evidence="2">
    <location>
        <begin position="200"/>
        <end position="220"/>
    </location>
</feature>
<feature type="transmembrane region" description="Helical" evidence="2">
    <location>
        <begin position="232"/>
        <end position="252"/>
    </location>
</feature>
<feature type="transmembrane region" description="Helical" evidence="2">
    <location>
        <begin position="310"/>
        <end position="330"/>
    </location>
</feature>
<feature type="transmembrane region" description="Helical" evidence="2">
    <location>
        <begin position="369"/>
        <end position="389"/>
    </location>
</feature>
<feature type="transmembrane region" description="Helical" evidence="2">
    <location>
        <begin position="411"/>
        <end position="431"/>
    </location>
</feature>
<feature type="transmembrane region" description="Helical" evidence="2">
    <location>
        <begin position="458"/>
        <end position="478"/>
    </location>
</feature>
<feature type="transmembrane region" description="Helical" evidence="2">
    <location>
        <begin position="497"/>
        <end position="517"/>
    </location>
</feature>
<feature type="transmembrane region" description="Helical" evidence="2">
    <location>
        <begin position="540"/>
        <end position="560"/>
    </location>
</feature>
<feature type="region of interest" description="Disordered" evidence="3">
    <location>
        <begin position="1"/>
        <end position="26"/>
    </location>
</feature>
<feature type="compositionally biased region" description="Basic and acidic residues" evidence="3">
    <location>
        <begin position="1"/>
        <end position="14"/>
    </location>
</feature>
<feature type="glycosylation site" description="N-linked (GlcNAc...) asparagine" evidence="2">
    <location>
        <position position="61"/>
    </location>
</feature>
<feature type="glycosylation site" description="N-linked (GlcNAc...) asparagine" evidence="2">
    <location>
        <position position="66"/>
    </location>
</feature>
<feature type="glycosylation site" description="N-linked (GlcNAc...) asparagine" evidence="2">
    <location>
        <position position="178"/>
    </location>
</feature>
<feature type="glycosylation site" description="N-linked (GlcNAc...) asparagine" evidence="2">
    <location>
        <position position="223"/>
    </location>
</feature>
<feature type="glycosylation site" description="N-linked (GlcNAc...) asparagine" evidence="2">
    <location>
        <position position="356"/>
    </location>
</feature>
<feature type="glycosylation site" description="N-linked (GlcNAc...) asparagine" evidence="2">
    <location>
        <position position="439"/>
    </location>
</feature>
<feature type="sequence variant" id="VAR_034592" description="In dbSNP:rs17855607." evidence="4">
    <original>I</original>
    <variation>F</variation>
    <location>
        <position position="349"/>
    </location>
</feature>
<feature type="helix" evidence="16">
    <location>
        <begin position="31"/>
        <end position="62"/>
    </location>
</feature>
<feature type="helix" evidence="16">
    <location>
        <begin position="68"/>
        <end position="70"/>
    </location>
</feature>
<feature type="strand" evidence="16">
    <location>
        <begin position="72"/>
        <end position="74"/>
    </location>
</feature>
<feature type="helix" evidence="16">
    <location>
        <begin position="75"/>
        <end position="97"/>
    </location>
</feature>
<feature type="helix" evidence="16">
    <location>
        <begin position="101"/>
        <end position="122"/>
    </location>
</feature>
<feature type="helix" evidence="16">
    <location>
        <begin position="124"/>
        <end position="130"/>
    </location>
</feature>
<feature type="helix" evidence="16">
    <location>
        <begin position="158"/>
        <end position="190"/>
    </location>
</feature>
<feature type="helix" evidence="16">
    <location>
        <begin position="192"/>
        <end position="223"/>
    </location>
</feature>
<feature type="helix" evidence="16">
    <location>
        <begin position="227"/>
        <end position="246"/>
    </location>
</feature>
<feature type="turn" evidence="16">
    <location>
        <begin position="247"/>
        <end position="250"/>
    </location>
</feature>
<feature type="helix" evidence="16">
    <location>
        <begin position="304"/>
        <end position="321"/>
    </location>
</feature>
<feature type="helix" evidence="16">
    <location>
        <begin position="323"/>
        <end position="342"/>
    </location>
</feature>
<feature type="helix" evidence="16">
    <location>
        <begin position="371"/>
        <end position="392"/>
    </location>
</feature>
<feature type="helix" evidence="16">
    <location>
        <begin position="394"/>
        <end position="400"/>
    </location>
</feature>
<feature type="helix" evidence="16">
    <location>
        <begin position="409"/>
        <end position="438"/>
    </location>
</feature>
<feature type="helix" evidence="16">
    <location>
        <begin position="458"/>
        <end position="461"/>
    </location>
</feature>
<feature type="helix" evidence="16">
    <location>
        <begin position="462"/>
        <end position="473"/>
    </location>
</feature>
<feature type="helix" evidence="16">
    <location>
        <begin position="477"/>
        <end position="483"/>
    </location>
</feature>
<feature type="turn" evidence="16">
    <location>
        <begin position="488"/>
        <end position="490"/>
    </location>
</feature>
<feature type="helix" evidence="16">
    <location>
        <begin position="492"/>
        <end position="516"/>
    </location>
</feature>
<feature type="helix" evidence="16">
    <location>
        <begin position="517"/>
        <end position="521"/>
    </location>
</feature>
<feature type="strand" evidence="16">
    <location>
        <begin position="522"/>
        <end position="524"/>
    </location>
</feature>
<feature type="helix" evidence="16">
    <location>
        <begin position="528"/>
        <end position="531"/>
    </location>
</feature>
<feature type="strand" evidence="16">
    <location>
        <begin position="532"/>
        <end position="534"/>
    </location>
</feature>
<feature type="helix" evidence="16">
    <location>
        <begin position="538"/>
        <end position="563"/>
    </location>
</feature>
<reference key="1">
    <citation type="submission" date="1998-12" db="EMBL/GenBank/DDBJ databases">
        <title>Molecular cloning of a new member of peptide transporter.</title>
        <authorList>
            <person name="Ishiabshi K."/>
            <person name="Imai M."/>
        </authorList>
    </citation>
    <scope>NUCLEOTIDE SEQUENCE [MRNA]</scope>
    <source>
        <tissue>Placenta</tissue>
    </source>
</reference>
<reference key="2">
    <citation type="submission" date="1999-03" db="EMBL/GenBank/DDBJ databases">
        <title>Cloning of a novel gene of peptide transporter from human osteoclast.</title>
        <authorList>
            <person name="Yamane S."/>
            <person name="Toyosaki-Maeda T."/>
            <person name="Tsuruta Y."/>
            <person name="Suzuki R."/>
            <person name="Ochi T."/>
        </authorList>
    </citation>
    <scope>NUCLEOTIDE SEQUENCE [MRNA]</scope>
    <source>
        <tissue>Synovial fluid</tissue>
    </source>
</reference>
<reference key="3">
    <citation type="journal article" date="2006" name="Nature">
        <title>Human chromosome 11 DNA sequence and analysis including novel gene identification.</title>
        <authorList>
            <person name="Taylor T.D."/>
            <person name="Noguchi H."/>
            <person name="Totoki Y."/>
            <person name="Toyoda A."/>
            <person name="Kuroki Y."/>
            <person name="Dewar K."/>
            <person name="Lloyd C."/>
            <person name="Itoh T."/>
            <person name="Takeda T."/>
            <person name="Kim D.-W."/>
            <person name="She X."/>
            <person name="Barlow K.F."/>
            <person name="Bloom T."/>
            <person name="Bruford E."/>
            <person name="Chang J.L."/>
            <person name="Cuomo C.A."/>
            <person name="Eichler E."/>
            <person name="FitzGerald M.G."/>
            <person name="Jaffe D.B."/>
            <person name="LaButti K."/>
            <person name="Nicol R."/>
            <person name="Park H.-S."/>
            <person name="Seaman C."/>
            <person name="Sougnez C."/>
            <person name="Yang X."/>
            <person name="Zimmer A.R."/>
            <person name="Zody M.C."/>
            <person name="Birren B.W."/>
            <person name="Nusbaum C."/>
            <person name="Fujiyama A."/>
            <person name="Hattori M."/>
            <person name="Rogers J."/>
            <person name="Lander E.S."/>
            <person name="Sakaki Y."/>
        </authorList>
    </citation>
    <scope>NUCLEOTIDE SEQUENCE [LARGE SCALE GENOMIC DNA]</scope>
</reference>
<reference key="4">
    <citation type="journal article" date="2004" name="Genome Res.">
        <title>The status, quality, and expansion of the NIH full-length cDNA project: the Mammalian Gene Collection (MGC).</title>
        <authorList>
            <consortium name="The MGC Project Team"/>
        </authorList>
    </citation>
    <scope>NUCLEOTIDE SEQUENCE [LARGE SCALE MRNA]</scope>
    <scope>VARIANT PHE-349</scope>
    <source>
        <tissue>Blood</tissue>
        <tissue>Pancreas</tissue>
    </source>
</reference>
<reference key="5">
    <citation type="journal article" date="2007" name="Traffic">
        <title>Integral and associated lysosomal membrane proteins.</title>
        <authorList>
            <person name="Schroeder B."/>
            <person name="Wrocklage C."/>
            <person name="Pan C."/>
            <person name="Jaeger R."/>
            <person name="Koesters B."/>
            <person name="Schaefer H."/>
            <person name="Elsaesser H.-P."/>
            <person name="Mann M."/>
            <person name="Hasilik A."/>
        </authorList>
    </citation>
    <scope>SUBCELLULAR LOCATION [LARGE SCALE ANALYSIS]</scope>
    <source>
        <tissue>Placenta</tissue>
    </source>
</reference>
<reference key="6">
    <citation type="journal article" date="2019" name="Amino Acids">
        <title>The proton-coupled oligopeptide transporters PEPT2, PHT1 and PHT2 mediate the uptake of carnosine in glioblastoma cells.</title>
        <authorList>
            <person name="Oppermann H."/>
            <person name="Heinrich M."/>
            <person name="Birkemeyer C."/>
            <person name="Meixensberger J."/>
            <person name="Gaunitz F."/>
        </authorList>
    </citation>
    <scope>FUNCTION</scope>
    <scope>TRANSPORTER ACTIVITY</scope>
</reference>
<reference key="7">
    <citation type="journal article" date="2019" name="J. Pharm. Sci.">
        <title>Substrate Transport Properties of the Human Peptide/Histidine Transporter PHT2 in Transfected MDCK Cells.</title>
        <authorList>
            <person name="Wang Y."/>
            <person name="Li P."/>
            <person name="Song F."/>
            <person name="Yang X."/>
            <person name="Weng Y."/>
            <person name="Ma Z."/>
            <person name="Wang L."/>
            <person name="Jiang H."/>
        </authorList>
    </citation>
    <scope>FUNCTION</scope>
    <scope>TRANSPORTER ACTIVITY</scope>
    <scope>BIOPHYSICOCHEMICAL PROPERTIES</scope>
</reference>
<dbReference type="EMBL" id="AB020598">
    <property type="protein sequence ID" value="BAA93432.1"/>
    <property type="molecule type" value="mRNA"/>
</dbReference>
<dbReference type="EMBL" id="AF135600">
    <property type="protein sequence ID" value="AAQ13565.1"/>
    <property type="molecule type" value="mRNA"/>
</dbReference>
<dbReference type="EMBL" id="AP003721">
    <property type="status" value="NOT_ANNOTATED_CDS"/>
    <property type="molecule type" value="Genomic_DNA"/>
</dbReference>
<dbReference type="EMBL" id="BC037974">
    <property type="protein sequence ID" value="AAH37974.1"/>
    <property type="molecule type" value="mRNA"/>
</dbReference>
<dbReference type="CCDS" id="CCDS7998.1"/>
<dbReference type="RefSeq" id="NP_057666.1">
    <property type="nucleotide sequence ID" value="NM_016582.3"/>
</dbReference>
<dbReference type="PDB" id="8WX2">
    <property type="method" value="EM"/>
    <property type="resolution" value="3.44 A"/>
    <property type="chains" value="A/B=1-581"/>
</dbReference>
<dbReference type="PDBsum" id="8WX2"/>
<dbReference type="EMDB" id="EMD-37898"/>
<dbReference type="SMR" id="Q8IY34"/>
<dbReference type="BioGRID" id="119447">
    <property type="interactions" value="232"/>
</dbReference>
<dbReference type="DIP" id="DIP-60838N"/>
<dbReference type="FunCoup" id="Q8IY34">
    <property type="interactions" value="104"/>
</dbReference>
<dbReference type="IntAct" id="Q8IY34">
    <property type="interactions" value="8"/>
</dbReference>
<dbReference type="STRING" id="9606.ENSP00000227880"/>
<dbReference type="TCDB" id="2.A.17.3.9">
    <property type="family name" value="the proton-dependent oligopeptide transporter (pot/ptr) family"/>
</dbReference>
<dbReference type="GlyCosmos" id="Q8IY34">
    <property type="glycosylation" value="6 sites, No reported glycans"/>
</dbReference>
<dbReference type="GlyGen" id="Q8IY34">
    <property type="glycosylation" value="6 sites"/>
</dbReference>
<dbReference type="iPTMnet" id="Q8IY34"/>
<dbReference type="PhosphoSitePlus" id="Q8IY34"/>
<dbReference type="BioMuta" id="SLC15A3"/>
<dbReference type="DMDM" id="296452890"/>
<dbReference type="jPOST" id="Q8IY34"/>
<dbReference type="MassIVE" id="Q8IY34"/>
<dbReference type="PaxDb" id="9606-ENSP00000227880"/>
<dbReference type="PeptideAtlas" id="Q8IY34"/>
<dbReference type="ProteomicsDB" id="71102"/>
<dbReference type="Antibodypedia" id="50766">
    <property type="antibodies" value="96 antibodies from 16 providers"/>
</dbReference>
<dbReference type="DNASU" id="51296"/>
<dbReference type="Ensembl" id="ENST00000227880.8">
    <property type="protein sequence ID" value="ENSP00000227880.2"/>
    <property type="gene ID" value="ENSG00000110446.12"/>
</dbReference>
<dbReference type="GeneID" id="51296"/>
<dbReference type="KEGG" id="hsa:51296"/>
<dbReference type="MANE-Select" id="ENST00000227880.8">
    <property type="protein sequence ID" value="ENSP00000227880.2"/>
    <property type="RefSeq nucleotide sequence ID" value="NM_016582.3"/>
    <property type="RefSeq protein sequence ID" value="NP_057666.1"/>
</dbReference>
<dbReference type="UCSC" id="uc001nqn.3">
    <property type="organism name" value="human"/>
</dbReference>
<dbReference type="AGR" id="HGNC:18068"/>
<dbReference type="CTD" id="51296"/>
<dbReference type="DisGeNET" id="51296"/>
<dbReference type="GeneCards" id="SLC15A3"/>
<dbReference type="HGNC" id="HGNC:18068">
    <property type="gene designation" value="SLC15A3"/>
</dbReference>
<dbReference type="HPA" id="ENSG00000110446">
    <property type="expression patterns" value="Low tissue specificity"/>
</dbReference>
<dbReference type="MIM" id="610408">
    <property type="type" value="gene"/>
</dbReference>
<dbReference type="neXtProt" id="NX_Q8IY34"/>
<dbReference type="OpenTargets" id="ENSG00000110446"/>
<dbReference type="PharmGKB" id="PA134919658"/>
<dbReference type="VEuPathDB" id="HostDB:ENSG00000110446"/>
<dbReference type="eggNOG" id="KOG1237">
    <property type="taxonomic scope" value="Eukaryota"/>
</dbReference>
<dbReference type="GeneTree" id="ENSGT00940000161889"/>
<dbReference type="HOGENOM" id="CLU_009313_6_1_1"/>
<dbReference type="InParanoid" id="Q8IY34"/>
<dbReference type="OMA" id="WMHGAEG"/>
<dbReference type="OrthoDB" id="8904098at2759"/>
<dbReference type="PAN-GO" id="Q8IY34">
    <property type="GO annotations" value="1 GO annotation based on evolutionary models"/>
</dbReference>
<dbReference type="PhylomeDB" id="Q8IY34"/>
<dbReference type="TreeFam" id="TF330897"/>
<dbReference type="PathwayCommons" id="Q8IY34"/>
<dbReference type="Reactome" id="R-HSA-427975">
    <property type="pathway name" value="Proton/oligopeptide cotransporters"/>
</dbReference>
<dbReference type="SignaLink" id="Q8IY34"/>
<dbReference type="BioGRID-ORCS" id="51296">
    <property type="hits" value="14 hits in 1154 CRISPR screens"/>
</dbReference>
<dbReference type="ChiTaRS" id="SLC15A3">
    <property type="organism name" value="human"/>
</dbReference>
<dbReference type="GenomeRNAi" id="51296"/>
<dbReference type="Pharos" id="Q8IY34">
    <property type="development level" value="Tbio"/>
</dbReference>
<dbReference type="PRO" id="PR:Q8IY34"/>
<dbReference type="Proteomes" id="UP000005640">
    <property type="component" value="Chromosome 11"/>
</dbReference>
<dbReference type="RNAct" id="Q8IY34">
    <property type="molecule type" value="protein"/>
</dbReference>
<dbReference type="Bgee" id="ENSG00000110446">
    <property type="expression patterns" value="Expressed in granulocyte and 115 other cell types or tissues"/>
</dbReference>
<dbReference type="ExpressionAtlas" id="Q8IY34">
    <property type="expression patterns" value="baseline and differential"/>
</dbReference>
<dbReference type="GO" id="GO:0010008">
    <property type="term" value="C:endosome membrane"/>
    <property type="evidence" value="ECO:0000250"/>
    <property type="project" value="UniProtKB"/>
</dbReference>
<dbReference type="GO" id="GO:0043231">
    <property type="term" value="C:intracellular membrane-bounded organelle"/>
    <property type="evidence" value="ECO:0000314"/>
    <property type="project" value="HPA"/>
</dbReference>
<dbReference type="GO" id="GO:0005765">
    <property type="term" value="C:lysosomal membrane"/>
    <property type="evidence" value="ECO:0007005"/>
    <property type="project" value="UniProtKB"/>
</dbReference>
<dbReference type="GO" id="GO:0071916">
    <property type="term" value="F:dipeptide transmembrane transporter activity"/>
    <property type="evidence" value="ECO:0000314"/>
    <property type="project" value="UniProtKB"/>
</dbReference>
<dbReference type="GO" id="GO:0015333">
    <property type="term" value="F:peptide:proton symporter activity"/>
    <property type="evidence" value="ECO:0000304"/>
    <property type="project" value="Reactome"/>
</dbReference>
<dbReference type="GO" id="GO:0015647">
    <property type="term" value="F:peptidoglycan transmembrane transporter activity"/>
    <property type="evidence" value="ECO:0000250"/>
    <property type="project" value="UniProtKB"/>
</dbReference>
<dbReference type="GO" id="GO:0140206">
    <property type="term" value="P:dipeptide import across plasma membrane"/>
    <property type="evidence" value="ECO:0000314"/>
    <property type="project" value="UniProtKB"/>
</dbReference>
<dbReference type="GO" id="GO:0045087">
    <property type="term" value="P:innate immune response"/>
    <property type="evidence" value="ECO:0007669"/>
    <property type="project" value="UniProtKB-KW"/>
</dbReference>
<dbReference type="GO" id="GO:0006811">
    <property type="term" value="P:monoatomic ion transport"/>
    <property type="evidence" value="ECO:0000304"/>
    <property type="project" value="Reactome"/>
</dbReference>
<dbReference type="GO" id="GO:0015835">
    <property type="term" value="P:peptidoglycan transport"/>
    <property type="evidence" value="ECO:0000250"/>
    <property type="project" value="UniProtKB"/>
</dbReference>
<dbReference type="GO" id="GO:0070434">
    <property type="term" value="P:positive regulation of nucleotide-binding oligomerization domain containing 2 signaling pathway"/>
    <property type="evidence" value="ECO:0000250"/>
    <property type="project" value="UniProtKB"/>
</dbReference>
<dbReference type="GO" id="GO:0015031">
    <property type="term" value="P:protein transport"/>
    <property type="evidence" value="ECO:0007669"/>
    <property type="project" value="UniProtKB-KW"/>
</dbReference>
<dbReference type="CDD" id="cd17348">
    <property type="entry name" value="MFS_SLC15A3_4"/>
    <property type="match status" value="1"/>
</dbReference>
<dbReference type="FunFam" id="1.20.1250.20:FF:000307">
    <property type="entry name" value="Solute carrier family 15 member 3"/>
    <property type="match status" value="1"/>
</dbReference>
<dbReference type="Gene3D" id="1.20.1250.20">
    <property type="entry name" value="MFS general substrate transporter like domains"/>
    <property type="match status" value="1"/>
</dbReference>
<dbReference type="InterPro" id="IPR036259">
    <property type="entry name" value="MFS_trans_sf"/>
</dbReference>
<dbReference type="InterPro" id="IPR000109">
    <property type="entry name" value="POT_fam"/>
</dbReference>
<dbReference type="PANTHER" id="PTHR11654">
    <property type="entry name" value="OLIGOPEPTIDE TRANSPORTER-RELATED"/>
    <property type="match status" value="1"/>
</dbReference>
<dbReference type="Pfam" id="PF00854">
    <property type="entry name" value="PTR2"/>
    <property type="match status" value="1"/>
</dbReference>
<dbReference type="SUPFAM" id="SSF103473">
    <property type="entry name" value="MFS general substrate transporter"/>
    <property type="match status" value="1"/>
</dbReference>
<accession>Q8IY34</accession>
<accession>Q9P2X9</accession>